<gene>
    <name evidence="1" type="primary">mnmG</name>
    <name evidence="1" type="synonym">gidA</name>
    <name type="ordered locus">EcSMS35_4109</name>
</gene>
<proteinExistence type="inferred from homology"/>
<sequence length="629" mass="69506">MFYPDPFDVIIIGGGHAGTEAAMAAARMGQQTLLLTHNIDTLGQMSCNPAIGGIGKGHLVKEVDALGGLMAKAIDLAGIQFRILNASKGPAVRATRAQADRVLYRQAVRTALENQPNLMIFQQAVEDLIVENDRVVGAVTQMGLKFRAKAVVLTVGTFLDGKIHIGLDNYSGGRAGDPPSIPLSRRLRELPLRVGRLKTGTPPRIDARTIDFSVLAQQHGDNPMPVFSFMGNASQHPQQVPCYITHTNEKTHDVIRSNLDRSPMYAGVIEGVGPRYCPSIEDKVMRFADRNQHQIFLEPEGLTSNEIYPNGISTSLPFDVQMQIVRSMQGMENAKIVRPGYAIEYDFFDPRDLKPTLESKFIQGLFFAGQINGTTGYEEAAAQGLLAGLNAARLSADKEGWAPARSQAYLGVLVDDLCTLGTKEPYRMFTSRAEYRLMLREDNADLRLTEIGRELGLVDDERWARFNEKLENIERERQRLKSTWVTPSAEAAAEVNAHLTAPLSREASGEDLLRRPEMTYEKLTTLTPFAPALTDEQAAEQVEIQVKYEGYIARQQDEIEKQLRNENTLLPATLDYRQVSGLSNEVIAKLNDHKPASIGQASRISGVTPAAISILLVWLKKQGMLRRSA</sequence>
<keyword id="KW-0963">Cytoplasm</keyword>
<keyword id="KW-0274">FAD</keyword>
<keyword id="KW-0285">Flavoprotein</keyword>
<keyword id="KW-0520">NAD</keyword>
<keyword id="KW-0819">tRNA processing</keyword>
<protein>
    <recommendedName>
        <fullName evidence="1">tRNA uridine 5-carboxymethylaminomethyl modification enzyme MnmG</fullName>
    </recommendedName>
    <alternativeName>
        <fullName evidence="1">Glucose-inhibited division protein A</fullName>
    </alternativeName>
</protein>
<feature type="chain" id="PRO_0000345268" description="tRNA uridine 5-carboxymethylaminomethyl modification enzyme MnmG">
    <location>
        <begin position="1"/>
        <end position="629"/>
    </location>
</feature>
<feature type="binding site" evidence="1">
    <location>
        <begin position="13"/>
        <end position="18"/>
    </location>
    <ligand>
        <name>FAD</name>
        <dbReference type="ChEBI" id="CHEBI:57692"/>
    </ligand>
</feature>
<feature type="binding site" evidence="1">
    <location>
        <position position="125"/>
    </location>
    <ligand>
        <name>FAD</name>
        <dbReference type="ChEBI" id="CHEBI:57692"/>
    </ligand>
</feature>
<feature type="binding site" evidence="1">
    <location>
        <position position="180"/>
    </location>
    <ligand>
        <name>FAD</name>
        <dbReference type="ChEBI" id="CHEBI:57692"/>
    </ligand>
</feature>
<feature type="binding site" evidence="1">
    <location>
        <begin position="273"/>
        <end position="287"/>
    </location>
    <ligand>
        <name>NAD(+)</name>
        <dbReference type="ChEBI" id="CHEBI:57540"/>
    </ligand>
</feature>
<feature type="binding site" evidence="1">
    <location>
        <position position="370"/>
    </location>
    <ligand>
        <name>FAD</name>
        <dbReference type="ChEBI" id="CHEBI:57692"/>
    </ligand>
</feature>
<evidence type="ECO:0000255" key="1">
    <source>
        <dbReference type="HAMAP-Rule" id="MF_00129"/>
    </source>
</evidence>
<comment type="function">
    <text evidence="1">NAD-binding protein involved in the addition of a carboxymethylaminomethyl (cmnm) group at the wobble position (U34) of certain tRNAs, forming tRNA-cmnm(5)s(2)U34.</text>
</comment>
<comment type="cofactor">
    <cofactor evidence="1">
        <name>FAD</name>
        <dbReference type="ChEBI" id="CHEBI:57692"/>
    </cofactor>
</comment>
<comment type="subunit">
    <text evidence="1">Homodimer. Heterotetramer of two MnmE and two MnmG subunits.</text>
</comment>
<comment type="subcellular location">
    <subcellularLocation>
        <location evidence="1">Cytoplasm</location>
    </subcellularLocation>
</comment>
<comment type="similarity">
    <text evidence="1">Belongs to the MnmG family.</text>
</comment>
<accession>B1LL68</accession>
<dbReference type="EMBL" id="CP000970">
    <property type="protein sequence ID" value="ACB16486.1"/>
    <property type="molecule type" value="Genomic_DNA"/>
</dbReference>
<dbReference type="RefSeq" id="WP_000499756.1">
    <property type="nucleotide sequence ID" value="NC_010498.1"/>
</dbReference>
<dbReference type="SMR" id="B1LL68"/>
<dbReference type="KEGG" id="ecm:EcSMS35_4109"/>
<dbReference type="HOGENOM" id="CLU_007831_2_2_6"/>
<dbReference type="Proteomes" id="UP000007011">
    <property type="component" value="Chromosome"/>
</dbReference>
<dbReference type="GO" id="GO:0005829">
    <property type="term" value="C:cytosol"/>
    <property type="evidence" value="ECO:0007669"/>
    <property type="project" value="TreeGrafter"/>
</dbReference>
<dbReference type="GO" id="GO:0050660">
    <property type="term" value="F:flavin adenine dinucleotide binding"/>
    <property type="evidence" value="ECO:0007669"/>
    <property type="project" value="UniProtKB-UniRule"/>
</dbReference>
<dbReference type="GO" id="GO:0030488">
    <property type="term" value="P:tRNA methylation"/>
    <property type="evidence" value="ECO:0007669"/>
    <property type="project" value="TreeGrafter"/>
</dbReference>
<dbReference type="GO" id="GO:0002098">
    <property type="term" value="P:tRNA wobble uridine modification"/>
    <property type="evidence" value="ECO:0007669"/>
    <property type="project" value="InterPro"/>
</dbReference>
<dbReference type="FunFam" id="1.10.10.1800:FF:000001">
    <property type="entry name" value="tRNA uridine 5-carboxymethylaminomethyl modification enzyme MnmG"/>
    <property type="match status" value="1"/>
</dbReference>
<dbReference type="FunFam" id="1.10.150.570:FF:000001">
    <property type="entry name" value="tRNA uridine 5-carboxymethylaminomethyl modification enzyme MnmG"/>
    <property type="match status" value="1"/>
</dbReference>
<dbReference type="FunFam" id="3.50.50.60:FF:000002">
    <property type="entry name" value="tRNA uridine 5-carboxymethylaminomethyl modification enzyme MnmG"/>
    <property type="match status" value="1"/>
</dbReference>
<dbReference type="FunFam" id="3.50.50.60:FF:000010">
    <property type="entry name" value="tRNA uridine 5-carboxymethylaminomethyl modification enzyme MnmG"/>
    <property type="match status" value="1"/>
</dbReference>
<dbReference type="Gene3D" id="3.50.50.60">
    <property type="entry name" value="FAD/NAD(P)-binding domain"/>
    <property type="match status" value="2"/>
</dbReference>
<dbReference type="Gene3D" id="1.10.150.570">
    <property type="entry name" value="GidA associated domain, C-terminal subdomain"/>
    <property type="match status" value="1"/>
</dbReference>
<dbReference type="Gene3D" id="1.10.10.1800">
    <property type="entry name" value="tRNA uridine 5-carboxymethylaminomethyl modification enzyme MnmG/GidA"/>
    <property type="match status" value="1"/>
</dbReference>
<dbReference type="HAMAP" id="MF_00129">
    <property type="entry name" value="MnmG_GidA"/>
    <property type="match status" value="1"/>
</dbReference>
<dbReference type="InterPro" id="IPR036188">
    <property type="entry name" value="FAD/NAD-bd_sf"/>
</dbReference>
<dbReference type="InterPro" id="IPR049312">
    <property type="entry name" value="GIDA_C_N"/>
</dbReference>
<dbReference type="InterPro" id="IPR004416">
    <property type="entry name" value="MnmG"/>
</dbReference>
<dbReference type="InterPro" id="IPR002218">
    <property type="entry name" value="MnmG-rel"/>
</dbReference>
<dbReference type="InterPro" id="IPR020595">
    <property type="entry name" value="MnmG-rel_CS"/>
</dbReference>
<dbReference type="InterPro" id="IPR026904">
    <property type="entry name" value="MnmG_C"/>
</dbReference>
<dbReference type="InterPro" id="IPR047001">
    <property type="entry name" value="MnmG_C_subdom"/>
</dbReference>
<dbReference type="InterPro" id="IPR044920">
    <property type="entry name" value="MnmG_C_subdom_sf"/>
</dbReference>
<dbReference type="InterPro" id="IPR040131">
    <property type="entry name" value="MnmG_N"/>
</dbReference>
<dbReference type="NCBIfam" id="TIGR00136">
    <property type="entry name" value="mnmG_gidA"/>
    <property type="match status" value="1"/>
</dbReference>
<dbReference type="PANTHER" id="PTHR11806">
    <property type="entry name" value="GLUCOSE INHIBITED DIVISION PROTEIN A"/>
    <property type="match status" value="1"/>
</dbReference>
<dbReference type="PANTHER" id="PTHR11806:SF0">
    <property type="entry name" value="PROTEIN MTO1 HOMOLOG, MITOCHONDRIAL"/>
    <property type="match status" value="1"/>
</dbReference>
<dbReference type="Pfam" id="PF01134">
    <property type="entry name" value="GIDA"/>
    <property type="match status" value="1"/>
</dbReference>
<dbReference type="Pfam" id="PF21680">
    <property type="entry name" value="GIDA_C_1st"/>
    <property type="match status" value="1"/>
</dbReference>
<dbReference type="Pfam" id="PF13932">
    <property type="entry name" value="SAM_GIDA_C"/>
    <property type="match status" value="1"/>
</dbReference>
<dbReference type="SMART" id="SM01228">
    <property type="entry name" value="GIDA_assoc_3"/>
    <property type="match status" value="1"/>
</dbReference>
<dbReference type="SUPFAM" id="SSF51905">
    <property type="entry name" value="FAD/NAD(P)-binding domain"/>
    <property type="match status" value="1"/>
</dbReference>
<dbReference type="PROSITE" id="PS01280">
    <property type="entry name" value="GIDA_1"/>
    <property type="match status" value="1"/>
</dbReference>
<dbReference type="PROSITE" id="PS01281">
    <property type="entry name" value="GIDA_2"/>
    <property type="match status" value="1"/>
</dbReference>
<organism>
    <name type="scientific">Escherichia coli (strain SMS-3-5 / SECEC)</name>
    <dbReference type="NCBI Taxonomy" id="439855"/>
    <lineage>
        <taxon>Bacteria</taxon>
        <taxon>Pseudomonadati</taxon>
        <taxon>Pseudomonadota</taxon>
        <taxon>Gammaproteobacteria</taxon>
        <taxon>Enterobacterales</taxon>
        <taxon>Enterobacteriaceae</taxon>
        <taxon>Escherichia</taxon>
    </lineage>
</organism>
<name>MNMG_ECOSM</name>
<reference key="1">
    <citation type="journal article" date="2008" name="J. Bacteriol.">
        <title>Insights into the environmental resistance gene pool from the genome sequence of the multidrug-resistant environmental isolate Escherichia coli SMS-3-5.</title>
        <authorList>
            <person name="Fricke W.F."/>
            <person name="Wright M.S."/>
            <person name="Lindell A.H."/>
            <person name="Harkins D.M."/>
            <person name="Baker-Austin C."/>
            <person name="Ravel J."/>
            <person name="Stepanauskas R."/>
        </authorList>
    </citation>
    <scope>NUCLEOTIDE SEQUENCE [LARGE SCALE GENOMIC DNA]</scope>
    <source>
        <strain>SMS-3-5 / SECEC</strain>
    </source>
</reference>